<evidence type="ECO:0000255" key="1">
    <source>
        <dbReference type="HAMAP-Rule" id="MF_00268"/>
    </source>
</evidence>
<comment type="function">
    <text evidence="1">Can catalyze the hydrolysis of ATP in the presence of single-stranded DNA, the ATP-dependent uptake of single-stranded DNA by duplex DNA, and the ATP-dependent hybridization of homologous single-stranded DNAs. It interacts with LexA causing its activation and leading to its autocatalytic cleavage.</text>
</comment>
<comment type="subcellular location">
    <subcellularLocation>
        <location evidence="1">Cytoplasm</location>
    </subcellularLocation>
</comment>
<comment type="similarity">
    <text evidence="1">Belongs to the RecA family.</text>
</comment>
<gene>
    <name evidence="1" type="primary">recA</name>
    <name type="ordered locus">Abu_2241</name>
</gene>
<reference key="1">
    <citation type="journal article" date="2007" name="PLoS ONE">
        <title>The complete genome sequence and analysis of the Epsilonproteobacterium Arcobacter butzleri.</title>
        <authorList>
            <person name="Miller W.G."/>
            <person name="Parker C.T."/>
            <person name="Rubenfield M."/>
            <person name="Mendz G.L."/>
            <person name="Woesten M.M.S.M."/>
            <person name="Ussery D.W."/>
            <person name="Stolz J.F."/>
            <person name="Binnewies T.T."/>
            <person name="Hallin P.F."/>
            <person name="Wang G."/>
            <person name="Malek J.A."/>
            <person name="Rogosin A."/>
            <person name="Stanker L.H."/>
            <person name="Mandrell R.E."/>
        </authorList>
    </citation>
    <scope>NUCLEOTIDE SEQUENCE [LARGE SCALE GENOMIC DNA]</scope>
    <source>
        <strain>RM4018</strain>
    </source>
</reference>
<protein>
    <recommendedName>
        <fullName evidence="1">Protein RecA</fullName>
    </recommendedName>
    <alternativeName>
        <fullName evidence="1">Recombinase A</fullName>
    </alternativeName>
</protein>
<sequence>MDENQKKSLELAIKQIDKAFGKGTLIRLGDKEVIPVETISTGSLGLDLALGVGGLPRGRVIEIYGPESSGKTTLTLHAIAEAQKAGGVCAFIDAEHALDVKYAKEIGVDTDNLLVSQPDFGEQALEILETVIRSGAVDLVVVDSVAALTPKVEIDGDMDDQQVGVQARLMSKALRKVTGLLSKMNCTVIFINQIRMKIGMTGYGSPETTTGGNALKFYSSVRLDIRRIATLKQGENSIGNRVKVKVVKNKVAAPFKQAEFDIMFGEGISKTGELVDYGVKLDIVDKAGAWFSYGDSKIGQGRENSKVFLKDNPEVAREIENKILESMGVNDELITSGTDDSDDISGLDD</sequence>
<name>RECA_ALIB4</name>
<keyword id="KW-0067">ATP-binding</keyword>
<keyword id="KW-0963">Cytoplasm</keyword>
<keyword id="KW-0227">DNA damage</keyword>
<keyword id="KW-0233">DNA recombination</keyword>
<keyword id="KW-0234">DNA repair</keyword>
<keyword id="KW-0238">DNA-binding</keyword>
<keyword id="KW-0547">Nucleotide-binding</keyword>
<keyword id="KW-1185">Reference proteome</keyword>
<keyword id="KW-0742">SOS response</keyword>
<feature type="chain" id="PRO_1000059121" description="Protein RecA">
    <location>
        <begin position="1"/>
        <end position="349"/>
    </location>
</feature>
<feature type="binding site" evidence="1">
    <location>
        <begin position="65"/>
        <end position="72"/>
    </location>
    <ligand>
        <name>ATP</name>
        <dbReference type="ChEBI" id="CHEBI:30616"/>
    </ligand>
</feature>
<dbReference type="EMBL" id="CP000361">
    <property type="protein sequence ID" value="ABV68454.1"/>
    <property type="molecule type" value="Genomic_DNA"/>
</dbReference>
<dbReference type="RefSeq" id="WP_012148085.1">
    <property type="nucleotide sequence ID" value="NC_009850.1"/>
</dbReference>
<dbReference type="SMR" id="A8EWY1"/>
<dbReference type="STRING" id="367737.Abu_2241"/>
<dbReference type="GeneID" id="24305389"/>
<dbReference type="KEGG" id="abu:Abu_2241"/>
<dbReference type="eggNOG" id="COG0468">
    <property type="taxonomic scope" value="Bacteria"/>
</dbReference>
<dbReference type="HOGENOM" id="CLU_040469_1_2_7"/>
<dbReference type="Proteomes" id="UP000001136">
    <property type="component" value="Chromosome"/>
</dbReference>
<dbReference type="GO" id="GO:0005829">
    <property type="term" value="C:cytosol"/>
    <property type="evidence" value="ECO:0007669"/>
    <property type="project" value="TreeGrafter"/>
</dbReference>
<dbReference type="GO" id="GO:0005524">
    <property type="term" value="F:ATP binding"/>
    <property type="evidence" value="ECO:0007669"/>
    <property type="project" value="UniProtKB-UniRule"/>
</dbReference>
<dbReference type="GO" id="GO:0016887">
    <property type="term" value="F:ATP hydrolysis activity"/>
    <property type="evidence" value="ECO:0007669"/>
    <property type="project" value="InterPro"/>
</dbReference>
<dbReference type="GO" id="GO:0140664">
    <property type="term" value="F:ATP-dependent DNA damage sensor activity"/>
    <property type="evidence" value="ECO:0007669"/>
    <property type="project" value="InterPro"/>
</dbReference>
<dbReference type="GO" id="GO:0003684">
    <property type="term" value="F:damaged DNA binding"/>
    <property type="evidence" value="ECO:0007669"/>
    <property type="project" value="UniProtKB-UniRule"/>
</dbReference>
<dbReference type="GO" id="GO:0003697">
    <property type="term" value="F:single-stranded DNA binding"/>
    <property type="evidence" value="ECO:0007669"/>
    <property type="project" value="UniProtKB-UniRule"/>
</dbReference>
<dbReference type="GO" id="GO:0006310">
    <property type="term" value="P:DNA recombination"/>
    <property type="evidence" value="ECO:0007669"/>
    <property type="project" value="UniProtKB-UniRule"/>
</dbReference>
<dbReference type="GO" id="GO:0006281">
    <property type="term" value="P:DNA repair"/>
    <property type="evidence" value="ECO:0007669"/>
    <property type="project" value="UniProtKB-UniRule"/>
</dbReference>
<dbReference type="GO" id="GO:0009432">
    <property type="term" value="P:SOS response"/>
    <property type="evidence" value="ECO:0007669"/>
    <property type="project" value="UniProtKB-UniRule"/>
</dbReference>
<dbReference type="CDD" id="cd00983">
    <property type="entry name" value="RecA"/>
    <property type="match status" value="1"/>
</dbReference>
<dbReference type="FunFam" id="3.40.50.300:FF:000087">
    <property type="entry name" value="Recombinase RecA"/>
    <property type="match status" value="1"/>
</dbReference>
<dbReference type="Gene3D" id="3.40.50.300">
    <property type="entry name" value="P-loop containing nucleotide triphosphate hydrolases"/>
    <property type="match status" value="1"/>
</dbReference>
<dbReference type="HAMAP" id="MF_00268">
    <property type="entry name" value="RecA"/>
    <property type="match status" value="1"/>
</dbReference>
<dbReference type="InterPro" id="IPR003593">
    <property type="entry name" value="AAA+_ATPase"/>
</dbReference>
<dbReference type="InterPro" id="IPR013765">
    <property type="entry name" value="DNA_recomb/repair_RecA"/>
</dbReference>
<dbReference type="InterPro" id="IPR020584">
    <property type="entry name" value="DNA_recomb/repair_RecA_CS"/>
</dbReference>
<dbReference type="InterPro" id="IPR027417">
    <property type="entry name" value="P-loop_NTPase"/>
</dbReference>
<dbReference type="InterPro" id="IPR049261">
    <property type="entry name" value="RecA-like_C"/>
</dbReference>
<dbReference type="InterPro" id="IPR049428">
    <property type="entry name" value="RecA-like_N"/>
</dbReference>
<dbReference type="InterPro" id="IPR020588">
    <property type="entry name" value="RecA_ATP-bd"/>
</dbReference>
<dbReference type="InterPro" id="IPR023400">
    <property type="entry name" value="RecA_C_sf"/>
</dbReference>
<dbReference type="InterPro" id="IPR020587">
    <property type="entry name" value="RecA_monomer-monomer_interface"/>
</dbReference>
<dbReference type="NCBIfam" id="TIGR02012">
    <property type="entry name" value="tigrfam_recA"/>
    <property type="match status" value="1"/>
</dbReference>
<dbReference type="PANTHER" id="PTHR45900:SF1">
    <property type="entry name" value="MITOCHONDRIAL DNA REPAIR PROTEIN RECA HOMOLOG-RELATED"/>
    <property type="match status" value="1"/>
</dbReference>
<dbReference type="PANTHER" id="PTHR45900">
    <property type="entry name" value="RECA"/>
    <property type="match status" value="1"/>
</dbReference>
<dbReference type="Pfam" id="PF00154">
    <property type="entry name" value="RecA"/>
    <property type="match status" value="1"/>
</dbReference>
<dbReference type="Pfam" id="PF21096">
    <property type="entry name" value="RecA_C"/>
    <property type="match status" value="1"/>
</dbReference>
<dbReference type="PRINTS" id="PR00142">
    <property type="entry name" value="RECA"/>
</dbReference>
<dbReference type="SMART" id="SM00382">
    <property type="entry name" value="AAA"/>
    <property type="match status" value="1"/>
</dbReference>
<dbReference type="SUPFAM" id="SSF52540">
    <property type="entry name" value="P-loop containing nucleoside triphosphate hydrolases"/>
    <property type="match status" value="1"/>
</dbReference>
<dbReference type="SUPFAM" id="SSF54752">
    <property type="entry name" value="RecA protein, C-terminal domain"/>
    <property type="match status" value="1"/>
</dbReference>
<dbReference type="PROSITE" id="PS00321">
    <property type="entry name" value="RECA_1"/>
    <property type="match status" value="1"/>
</dbReference>
<dbReference type="PROSITE" id="PS50162">
    <property type="entry name" value="RECA_2"/>
    <property type="match status" value="1"/>
</dbReference>
<dbReference type="PROSITE" id="PS50163">
    <property type="entry name" value="RECA_3"/>
    <property type="match status" value="1"/>
</dbReference>
<accession>A8EWY1</accession>
<organism>
    <name type="scientific">Aliarcobacter butzleri (strain RM4018)</name>
    <name type="common">Arcobacter butzleri</name>
    <dbReference type="NCBI Taxonomy" id="367737"/>
    <lineage>
        <taxon>Bacteria</taxon>
        <taxon>Pseudomonadati</taxon>
        <taxon>Campylobacterota</taxon>
        <taxon>Epsilonproteobacteria</taxon>
        <taxon>Campylobacterales</taxon>
        <taxon>Arcobacteraceae</taxon>
        <taxon>Aliarcobacter</taxon>
    </lineage>
</organism>
<proteinExistence type="inferred from homology"/>